<reference key="1">
    <citation type="journal article" date="2013" name="Nature">
        <title>The zebrafish reference genome sequence and its relationship to the human genome.</title>
        <authorList>
            <person name="Howe K."/>
            <person name="Clark M.D."/>
            <person name="Torroja C.F."/>
            <person name="Torrance J."/>
            <person name="Berthelot C."/>
            <person name="Muffato M."/>
            <person name="Collins J.E."/>
            <person name="Humphray S."/>
            <person name="McLaren K."/>
            <person name="Matthews L."/>
            <person name="McLaren S."/>
            <person name="Sealy I."/>
            <person name="Caccamo M."/>
            <person name="Churcher C."/>
            <person name="Scott C."/>
            <person name="Barrett J.C."/>
            <person name="Koch R."/>
            <person name="Rauch G.J."/>
            <person name="White S."/>
            <person name="Chow W."/>
            <person name="Kilian B."/>
            <person name="Quintais L.T."/>
            <person name="Guerra-Assuncao J.A."/>
            <person name="Zhou Y."/>
            <person name="Gu Y."/>
            <person name="Yen J."/>
            <person name="Vogel J.H."/>
            <person name="Eyre T."/>
            <person name="Redmond S."/>
            <person name="Banerjee R."/>
            <person name="Chi J."/>
            <person name="Fu B."/>
            <person name="Langley E."/>
            <person name="Maguire S.F."/>
            <person name="Laird G.K."/>
            <person name="Lloyd D."/>
            <person name="Kenyon E."/>
            <person name="Donaldson S."/>
            <person name="Sehra H."/>
            <person name="Almeida-King J."/>
            <person name="Loveland J."/>
            <person name="Trevanion S."/>
            <person name="Jones M."/>
            <person name="Quail M."/>
            <person name="Willey D."/>
            <person name="Hunt A."/>
            <person name="Burton J."/>
            <person name="Sims S."/>
            <person name="McLay K."/>
            <person name="Plumb B."/>
            <person name="Davis J."/>
            <person name="Clee C."/>
            <person name="Oliver K."/>
            <person name="Clark R."/>
            <person name="Riddle C."/>
            <person name="Elliot D."/>
            <person name="Threadgold G."/>
            <person name="Harden G."/>
            <person name="Ware D."/>
            <person name="Begum S."/>
            <person name="Mortimore B."/>
            <person name="Kerry G."/>
            <person name="Heath P."/>
            <person name="Phillimore B."/>
            <person name="Tracey A."/>
            <person name="Corby N."/>
            <person name="Dunn M."/>
            <person name="Johnson C."/>
            <person name="Wood J."/>
            <person name="Clark S."/>
            <person name="Pelan S."/>
            <person name="Griffiths G."/>
            <person name="Smith M."/>
            <person name="Glithero R."/>
            <person name="Howden P."/>
            <person name="Barker N."/>
            <person name="Lloyd C."/>
            <person name="Stevens C."/>
            <person name="Harley J."/>
            <person name="Holt K."/>
            <person name="Panagiotidis G."/>
            <person name="Lovell J."/>
            <person name="Beasley H."/>
            <person name="Henderson C."/>
            <person name="Gordon D."/>
            <person name="Auger K."/>
            <person name="Wright D."/>
            <person name="Collins J."/>
            <person name="Raisen C."/>
            <person name="Dyer L."/>
            <person name="Leung K."/>
            <person name="Robertson L."/>
            <person name="Ambridge K."/>
            <person name="Leongamornlert D."/>
            <person name="McGuire S."/>
            <person name="Gilderthorp R."/>
            <person name="Griffiths C."/>
            <person name="Manthravadi D."/>
            <person name="Nichol S."/>
            <person name="Barker G."/>
            <person name="Whitehead S."/>
            <person name="Kay M."/>
            <person name="Brown J."/>
            <person name="Murnane C."/>
            <person name="Gray E."/>
            <person name="Humphries M."/>
            <person name="Sycamore N."/>
            <person name="Barker D."/>
            <person name="Saunders D."/>
            <person name="Wallis J."/>
            <person name="Babbage A."/>
            <person name="Hammond S."/>
            <person name="Mashreghi-Mohammadi M."/>
            <person name="Barr L."/>
            <person name="Martin S."/>
            <person name="Wray P."/>
            <person name="Ellington A."/>
            <person name="Matthews N."/>
            <person name="Ellwood M."/>
            <person name="Woodmansey R."/>
            <person name="Clark G."/>
            <person name="Cooper J."/>
            <person name="Tromans A."/>
            <person name="Grafham D."/>
            <person name="Skuce C."/>
            <person name="Pandian R."/>
            <person name="Andrews R."/>
            <person name="Harrison E."/>
            <person name="Kimberley A."/>
            <person name="Garnett J."/>
            <person name="Fosker N."/>
            <person name="Hall R."/>
            <person name="Garner P."/>
            <person name="Kelly D."/>
            <person name="Bird C."/>
            <person name="Palmer S."/>
            <person name="Gehring I."/>
            <person name="Berger A."/>
            <person name="Dooley C.M."/>
            <person name="Ersan-Urun Z."/>
            <person name="Eser C."/>
            <person name="Geiger H."/>
            <person name="Geisler M."/>
            <person name="Karotki L."/>
            <person name="Kirn A."/>
            <person name="Konantz J."/>
            <person name="Konantz M."/>
            <person name="Oberlander M."/>
            <person name="Rudolph-Geiger S."/>
            <person name="Teucke M."/>
            <person name="Lanz C."/>
            <person name="Raddatz G."/>
            <person name="Osoegawa K."/>
            <person name="Zhu B."/>
            <person name="Rapp A."/>
            <person name="Widaa S."/>
            <person name="Langford C."/>
            <person name="Yang F."/>
            <person name="Schuster S.C."/>
            <person name="Carter N.P."/>
            <person name="Harrow J."/>
            <person name="Ning Z."/>
            <person name="Herrero J."/>
            <person name="Searle S.M."/>
            <person name="Enright A."/>
            <person name="Geisler R."/>
            <person name="Plasterk R.H."/>
            <person name="Lee C."/>
            <person name="Westerfield M."/>
            <person name="de Jong P.J."/>
            <person name="Zon L.I."/>
            <person name="Postlethwait J.H."/>
            <person name="Nusslein-Volhard C."/>
            <person name="Hubbard T.J."/>
            <person name="Roest Crollius H."/>
            <person name="Rogers J."/>
            <person name="Stemple D.L."/>
        </authorList>
    </citation>
    <scope>NUCLEOTIDE SEQUENCE [LARGE SCALE GENOMIC DNA]</scope>
    <source>
        <strain>Tuebingen</strain>
    </source>
</reference>
<reference key="2">
    <citation type="submission" date="2003-10" db="EMBL/GenBank/DDBJ databases">
        <authorList>
            <consortium name="NIH - Zebrafish Gene Collection (ZGC) project"/>
        </authorList>
    </citation>
    <scope>NUCLEOTIDE SEQUENCE [LARGE SCALE MRNA]</scope>
    <source>
        <tissue>Embryo</tissue>
        <tissue>Retina</tissue>
    </source>
</reference>
<sequence>MKKEQVVNCQFSVWYPLFKKHTIKSLILPIPQNVIDYLLDDGTLVVSGSENNNSQTQANNSDSDEEDIQWTDDETTTTVTAPEFPEFNVKVQEAINVLGGCIFPKLNWSAPRDANWIALNSSLQCQSLSEIFLLFKSSDFITHDLTQPFLHCSDDSPDPTINYELVLRKWSELIPGGEFRCFVKENKLIAICQRDYTQHYQHIGKQEASISTSILQFFRDNIQYQFPDEDFVLDVYRDSSGRVWLIDFNPFGEVTDSLLFTWEELTSGKNLTANQTQEETALPDGPAFRCTNSEVTVQPSPCLSYRIPRDFLDLTTGEDAYKLIDFLKLKRGQQEEEEESNEEGEEPQ</sequence>
<dbReference type="EMBL" id="BX323869">
    <property type="protein sequence ID" value="CAI11758.1"/>
    <property type="molecule type" value="Genomic_DNA"/>
</dbReference>
<dbReference type="EMBL" id="BC059483">
    <property type="protein sequence ID" value="AAH59483.1"/>
    <property type="molecule type" value="mRNA"/>
</dbReference>
<dbReference type="EMBL" id="BC071332">
    <property type="protein sequence ID" value="AAH71332.1"/>
    <property type="molecule type" value="mRNA"/>
</dbReference>
<dbReference type="RefSeq" id="NP_957015.1">
    <property type="nucleotide sequence ID" value="NM_200721.1"/>
</dbReference>
<dbReference type="SMR" id="Q6PC40"/>
<dbReference type="FunCoup" id="Q6PC40">
    <property type="interactions" value="1417"/>
</dbReference>
<dbReference type="STRING" id="7955.ENSDARP00000103868"/>
<dbReference type="PaxDb" id="7955-ENSDARP00000103868"/>
<dbReference type="Ensembl" id="ENSDART00000111986">
    <property type="protein sequence ID" value="ENSDARP00000103868"/>
    <property type="gene ID" value="ENSDARG00000075025"/>
</dbReference>
<dbReference type="GeneID" id="393694"/>
<dbReference type="KEGG" id="dre:393694"/>
<dbReference type="AGR" id="ZFIN:ZDB-GENE-040426-1680"/>
<dbReference type="CTD" id="8872"/>
<dbReference type="ZFIN" id="ZDB-GENE-040426-1680">
    <property type="gene designation" value="cdc123"/>
</dbReference>
<dbReference type="eggNOG" id="KOG2983">
    <property type="taxonomic scope" value="Eukaryota"/>
</dbReference>
<dbReference type="HOGENOM" id="CLU_034402_0_0_1"/>
<dbReference type="InParanoid" id="Q6PC40"/>
<dbReference type="OrthoDB" id="360540at2759"/>
<dbReference type="PhylomeDB" id="Q6PC40"/>
<dbReference type="TreeFam" id="TF323348"/>
<dbReference type="PRO" id="PR:Q6PC40"/>
<dbReference type="Proteomes" id="UP000000437">
    <property type="component" value="Chromosome 4"/>
</dbReference>
<dbReference type="Bgee" id="ENSDARG00000075025">
    <property type="expression patterns" value="Expressed in somite and 27 other cell types or tissues"/>
</dbReference>
<dbReference type="ExpressionAtlas" id="Q6PC40">
    <property type="expression patterns" value="baseline and differential"/>
</dbReference>
<dbReference type="GO" id="GO:0005737">
    <property type="term" value="C:cytoplasm"/>
    <property type="evidence" value="ECO:0000250"/>
    <property type="project" value="UniProtKB"/>
</dbReference>
<dbReference type="GO" id="GO:0005524">
    <property type="term" value="F:ATP binding"/>
    <property type="evidence" value="ECO:0000250"/>
    <property type="project" value="UniProtKB"/>
</dbReference>
<dbReference type="GO" id="GO:0000287">
    <property type="term" value="F:magnesium ion binding"/>
    <property type="evidence" value="ECO:0000250"/>
    <property type="project" value="UniProtKB"/>
</dbReference>
<dbReference type="GO" id="GO:0044183">
    <property type="term" value="F:protein folding chaperone"/>
    <property type="evidence" value="ECO:0000250"/>
    <property type="project" value="UniProtKB"/>
</dbReference>
<dbReference type="GO" id="GO:1905143">
    <property type="term" value="P:eukaryotic translation initiation factor 2 complex assembly"/>
    <property type="evidence" value="ECO:0000250"/>
    <property type="project" value="UniProtKB"/>
</dbReference>
<dbReference type="InterPro" id="IPR009772">
    <property type="entry name" value="CDC123"/>
</dbReference>
<dbReference type="PANTHER" id="PTHR15323:SF6">
    <property type="entry name" value="CELL DIVISION CYCLE PROTEIN 123 HOMOLOG"/>
    <property type="match status" value="1"/>
</dbReference>
<dbReference type="PANTHER" id="PTHR15323">
    <property type="entry name" value="D123 PROTEIN"/>
    <property type="match status" value="1"/>
</dbReference>
<dbReference type="Pfam" id="PF07065">
    <property type="entry name" value="D123"/>
    <property type="match status" value="1"/>
</dbReference>
<dbReference type="PIRSF" id="PIRSF007807">
    <property type="entry name" value="Cdc123"/>
    <property type="match status" value="1"/>
</dbReference>
<comment type="function">
    <text evidence="1 2">ATP-dependent protein-folding chaperone for the eIF2 complex (By similarity). Binds to the gamma subunit of the eIF2 complex which allows the subunit to assemble with the alpha and beta subunits (By similarity).</text>
</comment>
<comment type="subcellular location">
    <subcellularLocation>
        <location evidence="3">Cytoplasm</location>
    </subcellularLocation>
</comment>
<comment type="similarity">
    <text evidence="6">Belongs to the CDC123 family.</text>
</comment>
<keyword id="KW-0067">ATP-binding</keyword>
<keyword id="KW-0143">Chaperone</keyword>
<keyword id="KW-0963">Cytoplasm</keyword>
<keyword id="KW-0460">Magnesium</keyword>
<keyword id="KW-0479">Metal-binding</keyword>
<keyword id="KW-0547">Nucleotide-binding</keyword>
<keyword id="KW-1185">Reference proteome</keyword>
<name>CD123_DANRE</name>
<gene>
    <name type="primary">cdc123</name>
    <name type="ORF">zgc:73119</name>
</gene>
<evidence type="ECO:0000250" key="1">
    <source>
        <dbReference type="UniProtKB" id="O75794"/>
    </source>
</evidence>
<evidence type="ECO:0000250" key="2">
    <source>
        <dbReference type="UniProtKB" id="Q05791"/>
    </source>
</evidence>
<evidence type="ECO:0000250" key="3">
    <source>
        <dbReference type="UniProtKB" id="Q62834"/>
    </source>
</evidence>
<evidence type="ECO:0000250" key="4">
    <source>
        <dbReference type="UniProtKB" id="Q9P7N5"/>
    </source>
</evidence>
<evidence type="ECO:0000256" key="5">
    <source>
        <dbReference type="SAM" id="MobiDB-lite"/>
    </source>
</evidence>
<evidence type="ECO:0000305" key="6"/>
<accession>Q6PC40</accession>
<organism>
    <name type="scientific">Danio rerio</name>
    <name type="common">Zebrafish</name>
    <name type="synonym">Brachydanio rerio</name>
    <dbReference type="NCBI Taxonomy" id="7955"/>
    <lineage>
        <taxon>Eukaryota</taxon>
        <taxon>Metazoa</taxon>
        <taxon>Chordata</taxon>
        <taxon>Craniata</taxon>
        <taxon>Vertebrata</taxon>
        <taxon>Euteleostomi</taxon>
        <taxon>Actinopterygii</taxon>
        <taxon>Neopterygii</taxon>
        <taxon>Teleostei</taxon>
        <taxon>Ostariophysi</taxon>
        <taxon>Cypriniformes</taxon>
        <taxon>Danionidae</taxon>
        <taxon>Danioninae</taxon>
        <taxon>Danio</taxon>
    </lineage>
</organism>
<proteinExistence type="evidence at transcript level"/>
<protein>
    <recommendedName>
        <fullName evidence="6">Translation initiation factor eIF2 assembly protein</fullName>
    </recommendedName>
    <alternativeName>
        <fullName>Cell division cycle protein 123 homolog</fullName>
    </alternativeName>
</protein>
<feature type="chain" id="PRO_0000228666" description="Translation initiation factor eIF2 assembly protein">
    <location>
        <begin position="1"/>
        <end position="348"/>
    </location>
</feature>
<feature type="region of interest" description="Disordered" evidence="5">
    <location>
        <begin position="49"/>
        <end position="68"/>
    </location>
</feature>
<feature type="compositionally biased region" description="Polar residues" evidence="5">
    <location>
        <begin position="49"/>
        <end position="61"/>
    </location>
</feature>
<feature type="binding site" evidence="1">
    <location>
        <position position="105"/>
    </location>
    <ligand>
        <name>ATP</name>
        <dbReference type="ChEBI" id="CHEBI:30616"/>
    </ligand>
</feature>
<feature type="binding site" evidence="1">
    <location>
        <position position="108"/>
    </location>
    <ligand>
        <name>ATP</name>
        <dbReference type="ChEBI" id="CHEBI:30616"/>
    </ligand>
</feature>
<feature type="binding site" evidence="1">
    <location>
        <position position="110"/>
    </location>
    <ligand>
        <name>ATP</name>
        <dbReference type="ChEBI" id="CHEBI:30616"/>
    </ligand>
</feature>
<feature type="binding site" evidence="4">
    <location>
        <position position="112"/>
    </location>
    <ligand>
        <name>ATP</name>
        <dbReference type="ChEBI" id="CHEBI:30616"/>
    </ligand>
</feature>
<feature type="binding site" evidence="4">
    <location>
        <position position="168"/>
    </location>
    <ligand>
        <name>ATP</name>
        <dbReference type="ChEBI" id="CHEBI:30616"/>
    </ligand>
</feature>
<feature type="binding site" evidence="1">
    <location>
        <position position="169"/>
    </location>
    <ligand>
        <name>ATP</name>
        <dbReference type="ChEBI" id="CHEBI:30616"/>
    </ligand>
</feature>
<feature type="binding site" evidence="4">
    <location>
        <position position="170"/>
    </location>
    <ligand>
        <name>ATP</name>
        <dbReference type="ChEBI" id="CHEBI:30616"/>
    </ligand>
</feature>
<feature type="binding site" evidence="1">
    <location>
        <position position="178"/>
    </location>
    <ligand>
        <name>ATP</name>
        <dbReference type="ChEBI" id="CHEBI:30616"/>
    </ligand>
</feature>
<feature type="binding site" evidence="1">
    <location>
        <position position="180"/>
    </location>
    <ligand>
        <name>ATP</name>
        <dbReference type="ChEBI" id="CHEBI:30616"/>
    </ligand>
</feature>
<feature type="binding site" evidence="1">
    <location>
        <position position="194"/>
    </location>
    <ligand>
        <name>ATP</name>
        <dbReference type="ChEBI" id="CHEBI:30616"/>
    </ligand>
</feature>
<feature type="binding site" evidence="4">
    <location>
        <position position="234"/>
    </location>
    <ligand>
        <name>ATP</name>
        <dbReference type="ChEBI" id="CHEBI:30616"/>
    </ligand>
</feature>
<feature type="binding site" evidence="1">
    <location>
        <position position="247"/>
    </location>
    <ligand>
        <name>ATP</name>
        <dbReference type="ChEBI" id="CHEBI:30616"/>
    </ligand>
</feature>
<feature type="binding site" evidence="1">
    <location>
        <position position="247"/>
    </location>
    <ligand>
        <name>Mg(2+)</name>
        <dbReference type="ChEBI" id="CHEBI:18420"/>
    </ligand>
</feature>
<feature type="binding site" evidence="1">
    <location>
        <position position="249"/>
    </location>
    <ligand>
        <name>ATP</name>
        <dbReference type="ChEBI" id="CHEBI:30616"/>
    </ligand>
</feature>
<feature type="binding site" evidence="1">
    <location>
        <position position="249"/>
    </location>
    <ligand>
        <name>Mg(2+)</name>
        <dbReference type="ChEBI" id="CHEBI:18420"/>
    </ligand>
</feature>